<protein>
    <recommendedName>
        <fullName evidence="1">UDP-N-acetylglucosamine--N-acetylmuramyl-(pentapeptide) pyrophosphoryl-undecaprenol N-acetylglucosamine transferase 1</fullName>
        <ecNumber evidence="1">2.4.1.227</ecNumber>
    </recommendedName>
    <alternativeName>
        <fullName evidence="1">Undecaprenyl-PP-MurNAc-pentapeptide-UDPGlcNAc GlcNAc transferase 1</fullName>
    </alternativeName>
</protein>
<accession>Q812W5</accession>
<feature type="chain" id="PRO_0000109140" description="UDP-N-acetylglucosamine--N-acetylmuramyl-(pentapeptide) pyrophosphoryl-undecaprenol N-acetylglucosamine transferase 1">
    <location>
        <begin position="1"/>
        <end position="364"/>
    </location>
</feature>
<feature type="binding site" evidence="1">
    <location>
        <begin position="10"/>
        <end position="12"/>
    </location>
    <ligand>
        <name>UDP-N-acetyl-alpha-D-glucosamine</name>
        <dbReference type="ChEBI" id="CHEBI:57705"/>
    </ligand>
</feature>
<feature type="binding site" evidence="1">
    <location>
        <position position="124"/>
    </location>
    <ligand>
        <name>UDP-N-acetyl-alpha-D-glucosamine</name>
        <dbReference type="ChEBI" id="CHEBI:57705"/>
    </ligand>
</feature>
<feature type="binding site" evidence="1">
    <location>
        <position position="195"/>
    </location>
    <ligand>
        <name>UDP-N-acetyl-alpha-D-glucosamine</name>
        <dbReference type="ChEBI" id="CHEBI:57705"/>
    </ligand>
</feature>
<feature type="binding site" evidence="1">
    <location>
        <position position="250"/>
    </location>
    <ligand>
        <name>UDP-N-acetyl-alpha-D-glucosamine</name>
        <dbReference type="ChEBI" id="CHEBI:57705"/>
    </ligand>
</feature>
<feature type="binding site" evidence="1">
    <location>
        <position position="295"/>
    </location>
    <ligand>
        <name>UDP-N-acetyl-alpha-D-glucosamine</name>
        <dbReference type="ChEBI" id="CHEBI:57705"/>
    </ligand>
</feature>
<keyword id="KW-0131">Cell cycle</keyword>
<keyword id="KW-0132">Cell division</keyword>
<keyword id="KW-1003">Cell membrane</keyword>
<keyword id="KW-0133">Cell shape</keyword>
<keyword id="KW-0961">Cell wall biogenesis/degradation</keyword>
<keyword id="KW-0328">Glycosyltransferase</keyword>
<keyword id="KW-0472">Membrane</keyword>
<keyword id="KW-0573">Peptidoglycan synthesis</keyword>
<keyword id="KW-1185">Reference proteome</keyword>
<keyword id="KW-0808">Transferase</keyword>
<organism>
    <name type="scientific">Bacillus cereus (strain ATCC 14579 / DSM 31 / CCUG 7414 / JCM 2152 / NBRC 15305 / NCIMB 9373 / NCTC 2599 / NRRL B-3711)</name>
    <dbReference type="NCBI Taxonomy" id="226900"/>
    <lineage>
        <taxon>Bacteria</taxon>
        <taxon>Bacillati</taxon>
        <taxon>Bacillota</taxon>
        <taxon>Bacilli</taxon>
        <taxon>Bacillales</taxon>
        <taxon>Bacillaceae</taxon>
        <taxon>Bacillus</taxon>
        <taxon>Bacillus cereus group</taxon>
    </lineage>
</organism>
<gene>
    <name evidence="1" type="primary">murG1</name>
    <name type="ordered locus">BC_3910</name>
</gene>
<name>MURG1_BACCR</name>
<comment type="function">
    <text evidence="1">Cell wall formation. Catalyzes the transfer of a GlcNAc subunit on undecaprenyl-pyrophosphoryl-MurNAc-pentapeptide (lipid intermediate I) to form undecaprenyl-pyrophosphoryl-MurNAc-(pentapeptide)GlcNAc (lipid intermediate II).</text>
</comment>
<comment type="catalytic activity">
    <reaction evidence="1">
        <text>di-trans,octa-cis-undecaprenyl diphospho-N-acetyl-alpha-D-muramoyl-L-alanyl-D-glutamyl-meso-2,6-diaminopimeloyl-D-alanyl-D-alanine + UDP-N-acetyl-alpha-D-glucosamine = di-trans,octa-cis-undecaprenyl diphospho-[N-acetyl-alpha-D-glucosaminyl-(1-&gt;4)]-N-acetyl-alpha-D-muramoyl-L-alanyl-D-glutamyl-meso-2,6-diaminopimeloyl-D-alanyl-D-alanine + UDP + H(+)</text>
        <dbReference type="Rhea" id="RHEA:31227"/>
        <dbReference type="ChEBI" id="CHEBI:15378"/>
        <dbReference type="ChEBI" id="CHEBI:57705"/>
        <dbReference type="ChEBI" id="CHEBI:58223"/>
        <dbReference type="ChEBI" id="CHEBI:61387"/>
        <dbReference type="ChEBI" id="CHEBI:61388"/>
        <dbReference type="EC" id="2.4.1.227"/>
    </reaction>
</comment>
<comment type="pathway">
    <text evidence="1">Cell wall biogenesis; peptidoglycan biosynthesis.</text>
</comment>
<comment type="subcellular location">
    <subcellularLocation>
        <location evidence="1">Cell membrane</location>
        <topology evidence="1">Peripheral membrane protein</topology>
        <orientation evidence="1">Cytoplasmic side</orientation>
    </subcellularLocation>
</comment>
<comment type="similarity">
    <text evidence="1">Belongs to the glycosyltransferase 28 family. MurG subfamily.</text>
</comment>
<proteinExistence type="inferred from homology"/>
<reference key="1">
    <citation type="journal article" date="2003" name="Nature">
        <title>Genome sequence of Bacillus cereus and comparative analysis with Bacillus anthracis.</title>
        <authorList>
            <person name="Ivanova N."/>
            <person name="Sorokin A."/>
            <person name="Anderson I."/>
            <person name="Galleron N."/>
            <person name="Candelon B."/>
            <person name="Kapatral V."/>
            <person name="Bhattacharyya A."/>
            <person name="Reznik G."/>
            <person name="Mikhailova N."/>
            <person name="Lapidus A."/>
            <person name="Chu L."/>
            <person name="Mazur M."/>
            <person name="Goltsman E."/>
            <person name="Larsen N."/>
            <person name="D'Souza M."/>
            <person name="Walunas T."/>
            <person name="Grechkin Y."/>
            <person name="Pusch G."/>
            <person name="Haselkorn R."/>
            <person name="Fonstein M."/>
            <person name="Ehrlich S.D."/>
            <person name="Overbeek R."/>
            <person name="Kyrpides N.C."/>
        </authorList>
    </citation>
    <scope>NUCLEOTIDE SEQUENCE [LARGE SCALE GENOMIC DNA]</scope>
    <source>
        <strain>ATCC 14579 / DSM 31 / CCUG 7414 / JCM 2152 / NBRC 15305 / NCIMB 9373 / NCTC 2599 / NRRL B-3711</strain>
    </source>
</reference>
<sequence>MRVLVSGGGTGGHIYPALALIREIKKLNPEARFLYIGTENGLESTIVPKAGIPFQSIVISGFKRKISLDNVKTVMRFLKGVQDSKRYIRRFNPDIVIGTGGYVCGPVVYAAAKLGIPTIVHEQNSVPGVTNKFLSRYVDKVAVCFEAAIEHFPESKVVMTGNPRASEVMEQNGMKGKRSVGLSLPKKSVLIFGGSRGARPINDAFVEAIEQFGNKSYEILYVTGEVHYDKVMEAVKQKGNPSNVIIKPFIHNMPEVLTGVDLVVSRAGATTLAELTALGKPSVLIPSPYVTNNHQEKNARSVVDKGAAKMLLEKDLTAETLIRDIDEILLDTQTLQNMKLAAKQLGIPDAANKLYEVMNKLVKK</sequence>
<dbReference type="EC" id="2.4.1.227" evidence="1"/>
<dbReference type="EMBL" id="AE016877">
    <property type="protein sequence ID" value="AAP10831.1"/>
    <property type="molecule type" value="Genomic_DNA"/>
</dbReference>
<dbReference type="RefSeq" id="NP_833630.1">
    <property type="nucleotide sequence ID" value="NC_004722.1"/>
</dbReference>
<dbReference type="SMR" id="Q812W5"/>
<dbReference type="STRING" id="226900.BC_3910"/>
<dbReference type="CAZy" id="GT28">
    <property type="family name" value="Glycosyltransferase Family 28"/>
</dbReference>
<dbReference type="KEGG" id="bce:BC3910"/>
<dbReference type="PATRIC" id="fig|226900.8.peg.4032"/>
<dbReference type="HOGENOM" id="CLU_037404_0_1_9"/>
<dbReference type="OrthoDB" id="9808936at2"/>
<dbReference type="UniPathway" id="UPA00219"/>
<dbReference type="Proteomes" id="UP000001417">
    <property type="component" value="Chromosome"/>
</dbReference>
<dbReference type="GO" id="GO:0005886">
    <property type="term" value="C:plasma membrane"/>
    <property type="evidence" value="ECO:0007669"/>
    <property type="project" value="UniProtKB-SubCell"/>
</dbReference>
<dbReference type="GO" id="GO:0016757">
    <property type="term" value="F:glycosyltransferase activity"/>
    <property type="evidence" value="ECO:0000318"/>
    <property type="project" value="GO_Central"/>
</dbReference>
<dbReference type="GO" id="GO:0051991">
    <property type="term" value="F:UDP-N-acetyl-D-glucosamine:N-acetylmuramoyl-L-alanyl-D-glutamyl-meso-2,6-diaminopimelyl-D-alanyl-D-alanine-diphosphoundecaprenol 4-beta-N-acetylglucosaminlytransferase activity"/>
    <property type="evidence" value="ECO:0007669"/>
    <property type="project" value="RHEA"/>
</dbReference>
<dbReference type="GO" id="GO:0050511">
    <property type="term" value="F:undecaprenyldiphospho-muramoylpentapeptide beta-N-acetylglucosaminyltransferase activity"/>
    <property type="evidence" value="ECO:0007669"/>
    <property type="project" value="UniProtKB-UniRule"/>
</dbReference>
<dbReference type="GO" id="GO:0005975">
    <property type="term" value="P:carbohydrate metabolic process"/>
    <property type="evidence" value="ECO:0007669"/>
    <property type="project" value="InterPro"/>
</dbReference>
<dbReference type="GO" id="GO:0051301">
    <property type="term" value="P:cell division"/>
    <property type="evidence" value="ECO:0007669"/>
    <property type="project" value="UniProtKB-KW"/>
</dbReference>
<dbReference type="GO" id="GO:0071555">
    <property type="term" value="P:cell wall organization"/>
    <property type="evidence" value="ECO:0007669"/>
    <property type="project" value="UniProtKB-KW"/>
</dbReference>
<dbReference type="GO" id="GO:0030259">
    <property type="term" value="P:lipid glycosylation"/>
    <property type="evidence" value="ECO:0007669"/>
    <property type="project" value="UniProtKB-UniRule"/>
</dbReference>
<dbReference type="GO" id="GO:0009252">
    <property type="term" value="P:peptidoglycan biosynthetic process"/>
    <property type="evidence" value="ECO:0007669"/>
    <property type="project" value="UniProtKB-UniRule"/>
</dbReference>
<dbReference type="GO" id="GO:0008360">
    <property type="term" value="P:regulation of cell shape"/>
    <property type="evidence" value="ECO:0007669"/>
    <property type="project" value="UniProtKB-KW"/>
</dbReference>
<dbReference type="CDD" id="cd03785">
    <property type="entry name" value="GT28_MurG"/>
    <property type="match status" value="1"/>
</dbReference>
<dbReference type="Gene3D" id="3.40.50.2000">
    <property type="entry name" value="Glycogen Phosphorylase B"/>
    <property type="match status" value="2"/>
</dbReference>
<dbReference type="HAMAP" id="MF_00033">
    <property type="entry name" value="MurG"/>
    <property type="match status" value="1"/>
</dbReference>
<dbReference type="InterPro" id="IPR006009">
    <property type="entry name" value="GlcNAc_MurG"/>
</dbReference>
<dbReference type="InterPro" id="IPR007235">
    <property type="entry name" value="Glyco_trans_28_C"/>
</dbReference>
<dbReference type="InterPro" id="IPR004276">
    <property type="entry name" value="GlycoTrans_28_N"/>
</dbReference>
<dbReference type="NCBIfam" id="TIGR01133">
    <property type="entry name" value="murG"/>
    <property type="match status" value="1"/>
</dbReference>
<dbReference type="PANTHER" id="PTHR21015:SF22">
    <property type="entry name" value="GLYCOSYLTRANSFERASE"/>
    <property type="match status" value="1"/>
</dbReference>
<dbReference type="PANTHER" id="PTHR21015">
    <property type="entry name" value="UDP-N-ACETYLGLUCOSAMINE--N-ACETYLMURAMYL-(PENTAPEPTIDE) PYROPHOSPHORYL-UNDECAPRENOL N-ACETYLGLUCOSAMINE TRANSFERASE 1"/>
    <property type="match status" value="1"/>
</dbReference>
<dbReference type="Pfam" id="PF04101">
    <property type="entry name" value="Glyco_tran_28_C"/>
    <property type="match status" value="1"/>
</dbReference>
<dbReference type="Pfam" id="PF03033">
    <property type="entry name" value="Glyco_transf_28"/>
    <property type="match status" value="1"/>
</dbReference>
<dbReference type="SUPFAM" id="SSF53756">
    <property type="entry name" value="UDP-Glycosyltransferase/glycogen phosphorylase"/>
    <property type="match status" value="1"/>
</dbReference>
<evidence type="ECO:0000255" key="1">
    <source>
        <dbReference type="HAMAP-Rule" id="MF_00033"/>
    </source>
</evidence>